<dbReference type="EC" id="3.6.5.-"/>
<dbReference type="EMBL" id="DS231667">
    <property type="protein sequence ID" value="ESU14897.1"/>
    <property type="molecule type" value="Genomic_DNA"/>
</dbReference>
<dbReference type="EMBL" id="HG970333">
    <property type="protein sequence ID" value="CEF76793.1"/>
    <property type="molecule type" value="Genomic_DNA"/>
</dbReference>
<dbReference type="RefSeq" id="XP_011320322.1">
    <property type="nucleotide sequence ID" value="XM_011322020.1"/>
</dbReference>
<dbReference type="SMR" id="Q4I2W2"/>
<dbReference type="FunCoup" id="Q4I2W2">
    <property type="interactions" value="824"/>
</dbReference>
<dbReference type="STRING" id="229533.Q4I2W2"/>
<dbReference type="GeneID" id="23555450"/>
<dbReference type="KEGG" id="fgr:FGSG_08446"/>
<dbReference type="VEuPathDB" id="FungiDB:FGRAMPH1_01G09981"/>
<dbReference type="eggNOG" id="KOG1707">
    <property type="taxonomic scope" value="Eukaryota"/>
</dbReference>
<dbReference type="HOGENOM" id="CLU_014255_3_0_1"/>
<dbReference type="InParanoid" id="Q4I2W2"/>
<dbReference type="OrthoDB" id="56756at110618"/>
<dbReference type="BRENDA" id="3.6.5.2">
    <property type="organism ID" value="2428"/>
</dbReference>
<dbReference type="Proteomes" id="UP000070720">
    <property type="component" value="Chromosome 2"/>
</dbReference>
<dbReference type="GO" id="GO:0005741">
    <property type="term" value="C:mitochondrial outer membrane"/>
    <property type="evidence" value="ECO:0007669"/>
    <property type="project" value="UniProtKB-SubCell"/>
</dbReference>
<dbReference type="GO" id="GO:0005509">
    <property type="term" value="F:calcium ion binding"/>
    <property type="evidence" value="ECO:0007669"/>
    <property type="project" value="InterPro"/>
</dbReference>
<dbReference type="GO" id="GO:0005525">
    <property type="term" value="F:GTP binding"/>
    <property type="evidence" value="ECO:0007669"/>
    <property type="project" value="UniProtKB-KW"/>
</dbReference>
<dbReference type="GO" id="GO:0003924">
    <property type="term" value="F:GTPase activity"/>
    <property type="evidence" value="ECO:0007669"/>
    <property type="project" value="InterPro"/>
</dbReference>
<dbReference type="GO" id="GO:0007005">
    <property type="term" value="P:mitochondrion organization"/>
    <property type="evidence" value="ECO:0007669"/>
    <property type="project" value="InterPro"/>
</dbReference>
<dbReference type="CDD" id="cd01892">
    <property type="entry name" value="Miro2"/>
    <property type="match status" value="1"/>
</dbReference>
<dbReference type="FunFam" id="1.10.238.10:FF:000127">
    <property type="entry name" value="Mitochondrial Rho GTPase"/>
    <property type="match status" value="1"/>
</dbReference>
<dbReference type="FunFam" id="1.10.238.10:FF:000185">
    <property type="entry name" value="Mitochondrial Rho GTPase"/>
    <property type="match status" value="1"/>
</dbReference>
<dbReference type="FunFam" id="3.40.50.300:FF:000553">
    <property type="entry name" value="Mitochondrial Rho GTPase"/>
    <property type="match status" value="1"/>
</dbReference>
<dbReference type="FunFam" id="3.40.50.300:FF:000572">
    <property type="entry name" value="Mitochondrial Rho GTPase"/>
    <property type="match status" value="1"/>
</dbReference>
<dbReference type="Gene3D" id="1.10.238.10">
    <property type="entry name" value="EF-hand"/>
    <property type="match status" value="2"/>
</dbReference>
<dbReference type="Gene3D" id="3.40.50.300">
    <property type="entry name" value="P-loop containing nucleotide triphosphate hydrolases"/>
    <property type="match status" value="2"/>
</dbReference>
<dbReference type="InterPro" id="IPR011992">
    <property type="entry name" value="EF-hand-dom_pair"/>
</dbReference>
<dbReference type="InterPro" id="IPR018247">
    <property type="entry name" value="EF_Hand_1_Ca_BS"/>
</dbReference>
<dbReference type="InterPro" id="IPR013566">
    <property type="entry name" value="EF_hand_assoc_1"/>
</dbReference>
<dbReference type="InterPro" id="IPR013567">
    <property type="entry name" value="EF_hand_assoc_2"/>
</dbReference>
<dbReference type="InterPro" id="IPR002048">
    <property type="entry name" value="EF_hand_dom"/>
</dbReference>
<dbReference type="InterPro" id="IPR021181">
    <property type="entry name" value="Miro"/>
</dbReference>
<dbReference type="InterPro" id="IPR052266">
    <property type="entry name" value="Miro-EF-hand_domain"/>
</dbReference>
<dbReference type="InterPro" id="IPR020860">
    <property type="entry name" value="MIRO_dom"/>
</dbReference>
<dbReference type="InterPro" id="IPR027417">
    <property type="entry name" value="P-loop_NTPase"/>
</dbReference>
<dbReference type="InterPro" id="IPR001806">
    <property type="entry name" value="Small_GTPase"/>
</dbReference>
<dbReference type="PANTHER" id="PTHR46819">
    <property type="entry name" value="EF-HAND CALCIUM-BINDING DOMAIN-CONTAINING PROTEIN 7"/>
    <property type="match status" value="1"/>
</dbReference>
<dbReference type="PANTHER" id="PTHR46819:SF1">
    <property type="entry name" value="EF-HAND CALCIUM-BINDING DOMAIN-CONTAINING PROTEIN 7"/>
    <property type="match status" value="1"/>
</dbReference>
<dbReference type="Pfam" id="PF08355">
    <property type="entry name" value="EF_assoc_1"/>
    <property type="match status" value="1"/>
</dbReference>
<dbReference type="Pfam" id="PF08356">
    <property type="entry name" value="EF_assoc_2"/>
    <property type="match status" value="1"/>
</dbReference>
<dbReference type="Pfam" id="PF00071">
    <property type="entry name" value="Ras"/>
    <property type="match status" value="1"/>
</dbReference>
<dbReference type="PIRSF" id="PIRSF037488">
    <property type="entry name" value="Mt_Rho_GTPase"/>
    <property type="match status" value="1"/>
</dbReference>
<dbReference type="PRINTS" id="PR00449">
    <property type="entry name" value="RASTRNSFRMNG"/>
</dbReference>
<dbReference type="SMART" id="SM00054">
    <property type="entry name" value="EFh"/>
    <property type="match status" value="2"/>
</dbReference>
<dbReference type="SMART" id="SM00175">
    <property type="entry name" value="RAB"/>
    <property type="match status" value="1"/>
</dbReference>
<dbReference type="SMART" id="SM00173">
    <property type="entry name" value="RAS"/>
    <property type="match status" value="1"/>
</dbReference>
<dbReference type="SMART" id="SM00174">
    <property type="entry name" value="RHO"/>
    <property type="match status" value="1"/>
</dbReference>
<dbReference type="SUPFAM" id="SSF47473">
    <property type="entry name" value="EF-hand"/>
    <property type="match status" value="1"/>
</dbReference>
<dbReference type="SUPFAM" id="SSF52540">
    <property type="entry name" value="P-loop containing nucleoside triphosphate hydrolases"/>
    <property type="match status" value="2"/>
</dbReference>
<dbReference type="PROSITE" id="PS00018">
    <property type="entry name" value="EF_HAND_1"/>
    <property type="match status" value="1"/>
</dbReference>
<dbReference type="PROSITE" id="PS50222">
    <property type="entry name" value="EF_HAND_2"/>
    <property type="match status" value="2"/>
</dbReference>
<dbReference type="PROSITE" id="PS51423">
    <property type="entry name" value="MIRO"/>
    <property type="match status" value="2"/>
</dbReference>
<name>GEM1_GIBZE</name>
<keyword id="KW-0106">Calcium</keyword>
<keyword id="KW-0342">GTP-binding</keyword>
<keyword id="KW-0378">Hydrolase</keyword>
<keyword id="KW-0472">Membrane</keyword>
<keyword id="KW-0479">Metal-binding</keyword>
<keyword id="KW-0496">Mitochondrion</keyword>
<keyword id="KW-1000">Mitochondrion outer membrane</keyword>
<keyword id="KW-0547">Nucleotide-binding</keyword>
<keyword id="KW-1185">Reference proteome</keyword>
<keyword id="KW-0677">Repeat</keyword>
<keyword id="KW-0812">Transmembrane</keyword>
<keyword id="KW-1133">Transmembrane helix</keyword>
<accession>Q4I2W2</accession>
<accession>A0A0E0RZW8</accession>
<accession>V6RLP7</accession>
<feature type="chain" id="PRO_0000239336" description="Mitochondrial Rho GTPase 1">
    <location>
        <begin position="1"/>
        <end position="627"/>
    </location>
</feature>
<feature type="topological domain" description="Cytoplasmic" evidence="2">
    <location>
        <begin position="1"/>
        <end position="599"/>
    </location>
</feature>
<feature type="transmembrane region" description="Helical; Anchor for type IV membrane protein" evidence="2">
    <location>
        <begin position="600"/>
        <end position="620"/>
    </location>
</feature>
<feature type="topological domain" description="Mitochondrial intermembrane" evidence="2">
    <location>
        <begin position="621"/>
        <end position="627"/>
    </location>
</feature>
<feature type="domain" description="Miro 1" evidence="4">
    <location>
        <begin position="1"/>
        <end position="169"/>
    </location>
</feature>
<feature type="domain" description="EF-hand 1" evidence="3">
    <location>
        <begin position="185"/>
        <end position="220"/>
    </location>
</feature>
<feature type="domain" description="EF-hand 2" evidence="3">
    <location>
        <begin position="305"/>
        <end position="340"/>
    </location>
</feature>
<feature type="domain" description="Miro 2" evidence="4">
    <location>
        <begin position="420"/>
        <end position="584"/>
    </location>
</feature>
<feature type="binding site" evidence="2">
    <location>
        <begin position="10"/>
        <end position="17"/>
    </location>
    <ligand>
        <name>GTP</name>
        <dbReference type="ChEBI" id="CHEBI:37565"/>
        <label>1</label>
    </ligand>
</feature>
<feature type="binding site" evidence="2">
    <location>
        <begin position="58"/>
        <end position="62"/>
    </location>
    <ligand>
        <name>GTP</name>
        <dbReference type="ChEBI" id="CHEBI:37565"/>
        <label>1</label>
    </ligand>
</feature>
<feature type="binding site" evidence="2">
    <location>
        <begin position="114"/>
        <end position="117"/>
    </location>
    <ligand>
        <name>GTP</name>
        <dbReference type="ChEBI" id="CHEBI:37565"/>
        <label>1</label>
    </ligand>
</feature>
<feature type="binding site" evidence="3">
    <location>
        <position position="198"/>
    </location>
    <ligand>
        <name>Ca(2+)</name>
        <dbReference type="ChEBI" id="CHEBI:29108"/>
        <label>1</label>
    </ligand>
</feature>
<feature type="binding site" evidence="3">
    <location>
        <position position="200"/>
    </location>
    <ligand>
        <name>Ca(2+)</name>
        <dbReference type="ChEBI" id="CHEBI:29108"/>
        <label>1</label>
    </ligand>
</feature>
<feature type="binding site" evidence="3">
    <location>
        <position position="202"/>
    </location>
    <ligand>
        <name>Ca(2+)</name>
        <dbReference type="ChEBI" id="CHEBI:29108"/>
        <label>1</label>
    </ligand>
</feature>
<feature type="binding site" evidence="3">
    <location>
        <position position="204"/>
    </location>
    <ligand>
        <name>Ca(2+)</name>
        <dbReference type="ChEBI" id="CHEBI:29108"/>
        <label>1</label>
    </ligand>
</feature>
<feature type="binding site" evidence="3">
    <location>
        <position position="209"/>
    </location>
    <ligand>
        <name>Ca(2+)</name>
        <dbReference type="ChEBI" id="CHEBI:29108"/>
        <label>1</label>
    </ligand>
</feature>
<feature type="binding site" evidence="5">
    <location>
        <position position="318"/>
    </location>
    <ligand>
        <name>Ca(2+)</name>
        <dbReference type="ChEBI" id="CHEBI:29108"/>
        <label>2</label>
    </ligand>
</feature>
<feature type="binding site" evidence="5">
    <location>
        <position position="320"/>
    </location>
    <ligand>
        <name>Ca(2+)</name>
        <dbReference type="ChEBI" id="CHEBI:29108"/>
        <label>2</label>
    </ligand>
</feature>
<feature type="binding site" evidence="5">
    <location>
        <position position="322"/>
    </location>
    <ligand>
        <name>Ca(2+)</name>
        <dbReference type="ChEBI" id="CHEBI:29108"/>
        <label>2</label>
    </ligand>
</feature>
<feature type="binding site" evidence="5">
    <location>
        <position position="329"/>
    </location>
    <ligand>
        <name>Ca(2+)</name>
        <dbReference type="ChEBI" id="CHEBI:29108"/>
        <label>2</label>
    </ligand>
</feature>
<feature type="binding site" evidence="2">
    <location>
        <begin position="429"/>
        <end position="436"/>
    </location>
    <ligand>
        <name>GTP</name>
        <dbReference type="ChEBI" id="CHEBI:37565"/>
        <label>2</label>
    </ligand>
</feature>
<feature type="binding site" evidence="2">
    <location>
        <begin position="465"/>
        <end position="469"/>
    </location>
    <ligand>
        <name>GTP</name>
        <dbReference type="ChEBI" id="CHEBI:37565"/>
        <label>2</label>
    </ligand>
</feature>
<feature type="binding site" evidence="2">
    <location>
        <begin position="534"/>
        <end position="537"/>
    </location>
    <ligand>
        <name>GTP</name>
        <dbReference type="ChEBI" id="CHEBI:37565"/>
        <label>2</label>
    </ligand>
</feature>
<gene>
    <name type="primary">GEM1</name>
    <name type="ORF">FGRRES_08446_M</name>
    <name type="ORF">FGSG_08446</name>
</gene>
<reference key="1">
    <citation type="journal article" date="2007" name="Science">
        <title>The Fusarium graminearum genome reveals a link between localized polymorphism and pathogen specialization.</title>
        <authorList>
            <person name="Cuomo C.A."/>
            <person name="Gueldener U."/>
            <person name="Xu J.-R."/>
            <person name="Trail F."/>
            <person name="Turgeon B.G."/>
            <person name="Di Pietro A."/>
            <person name="Walton J.D."/>
            <person name="Ma L.-J."/>
            <person name="Baker S.E."/>
            <person name="Rep M."/>
            <person name="Adam G."/>
            <person name="Antoniw J."/>
            <person name="Baldwin T."/>
            <person name="Calvo S.E."/>
            <person name="Chang Y.-L."/>
            <person name="DeCaprio D."/>
            <person name="Gale L.R."/>
            <person name="Gnerre S."/>
            <person name="Goswami R.S."/>
            <person name="Hammond-Kosack K."/>
            <person name="Harris L.J."/>
            <person name="Hilburn K."/>
            <person name="Kennell J.C."/>
            <person name="Kroken S."/>
            <person name="Magnuson J.K."/>
            <person name="Mannhaupt G."/>
            <person name="Mauceli E.W."/>
            <person name="Mewes H.-W."/>
            <person name="Mitterbauer R."/>
            <person name="Muehlbauer G."/>
            <person name="Muensterkoetter M."/>
            <person name="Nelson D."/>
            <person name="O'Donnell K."/>
            <person name="Ouellet T."/>
            <person name="Qi W."/>
            <person name="Quesneville H."/>
            <person name="Roncero M.I.G."/>
            <person name="Seong K.-Y."/>
            <person name="Tetko I.V."/>
            <person name="Urban M."/>
            <person name="Waalwijk C."/>
            <person name="Ward T.J."/>
            <person name="Yao J."/>
            <person name="Birren B.W."/>
            <person name="Kistler H.C."/>
        </authorList>
    </citation>
    <scope>NUCLEOTIDE SEQUENCE [LARGE SCALE GENOMIC DNA]</scope>
    <source>
        <strain>ATCC MYA-4620 / CBS 123657 / FGSC 9075 / NRRL 31084 / PH-1</strain>
    </source>
</reference>
<reference key="2">
    <citation type="journal article" date="2010" name="Nature">
        <title>Comparative genomics reveals mobile pathogenicity chromosomes in Fusarium.</title>
        <authorList>
            <person name="Ma L.-J."/>
            <person name="van der Does H.C."/>
            <person name="Borkovich K.A."/>
            <person name="Coleman J.J."/>
            <person name="Daboussi M.-J."/>
            <person name="Di Pietro A."/>
            <person name="Dufresne M."/>
            <person name="Freitag M."/>
            <person name="Grabherr M."/>
            <person name="Henrissat B."/>
            <person name="Houterman P.M."/>
            <person name="Kang S."/>
            <person name="Shim W.-B."/>
            <person name="Woloshuk C."/>
            <person name="Xie X."/>
            <person name="Xu J.-R."/>
            <person name="Antoniw J."/>
            <person name="Baker S.E."/>
            <person name="Bluhm B.H."/>
            <person name="Breakspear A."/>
            <person name="Brown D.W."/>
            <person name="Butchko R.A.E."/>
            <person name="Chapman S."/>
            <person name="Coulson R."/>
            <person name="Coutinho P.M."/>
            <person name="Danchin E.G.J."/>
            <person name="Diener A."/>
            <person name="Gale L.R."/>
            <person name="Gardiner D.M."/>
            <person name="Goff S."/>
            <person name="Hammond-Kosack K.E."/>
            <person name="Hilburn K."/>
            <person name="Hua-Van A."/>
            <person name="Jonkers W."/>
            <person name="Kazan K."/>
            <person name="Kodira C.D."/>
            <person name="Koehrsen M."/>
            <person name="Kumar L."/>
            <person name="Lee Y.-H."/>
            <person name="Li L."/>
            <person name="Manners J.M."/>
            <person name="Miranda-Saavedra D."/>
            <person name="Mukherjee M."/>
            <person name="Park G."/>
            <person name="Park J."/>
            <person name="Park S.-Y."/>
            <person name="Proctor R.H."/>
            <person name="Regev A."/>
            <person name="Ruiz-Roldan M.C."/>
            <person name="Sain D."/>
            <person name="Sakthikumar S."/>
            <person name="Sykes S."/>
            <person name="Schwartz D.C."/>
            <person name="Turgeon B.G."/>
            <person name="Wapinski I."/>
            <person name="Yoder O."/>
            <person name="Young S."/>
            <person name="Zeng Q."/>
            <person name="Zhou S."/>
            <person name="Galagan J."/>
            <person name="Cuomo C.A."/>
            <person name="Kistler H.C."/>
            <person name="Rep M."/>
        </authorList>
    </citation>
    <scope>GENOME REANNOTATION</scope>
    <source>
        <strain>ATCC MYA-4620 / CBS 123657 / FGSC 9075 / NRRL 31084 / PH-1</strain>
    </source>
</reference>
<reference key="3">
    <citation type="journal article" date="2015" name="BMC Genomics">
        <title>The completed genome sequence of the pathogenic ascomycete fungus Fusarium graminearum.</title>
        <authorList>
            <person name="King R."/>
            <person name="Urban M."/>
            <person name="Hammond-Kosack M.C.U."/>
            <person name="Hassani-Pak K."/>
            <person name="Hammond-Kosack K.E."/>
        </authorList>
    </citation>
    <scope>NUCLEOTIDE SEQUENCE [LARGE SCALE GENOMIC DNA]</scope>
    <source>
        <strain>ATCC MYA-4620 / CBS 123657 / FGSC 9075 / NRRL 31084 / PH-1</strain>
    </source>
</reference>
<comment type="function">
    <text evidence="1">Mitochondrial GTPase involved in mitochondrial trafficking. Probably involved in control of anterograde transport of mitochondria and their subcellular distribution.</text>
</comment>
<comment type="subcellular location">
    <subcellularLocation>
        <location evidence="1">Mitochondrion outer membrane</location>
        <topology evidence="1">Single-pass type IV membrane protein</topology>
    </subcellularLocation>
</comment>
<comment type="similarity">
    <text evidence="4 5">Belongs to the mitochondrial Rho GTPase family.</text>
</comment>
<protein>
    <recommendedName>
        <fullName>Mitochondrial Rho GTPase 1</fullName>
        <ecNumber>3.6.5.-</ecNumber>
    </recommendedName>
    <alternativeName>
        <fullName>GTPase EF-hand protein of mitochondria 1</fullName>
    </alternativeName>
</protein>
<proteinExistence type="inferred from homology"/>
<evidence type="ECO:0000250" key="1">
    <source>
        <dbReference type="UniProtKB" id="P39722"/>
    </source>
</evidence>
<evidence type="ECO:0000255" key="2"/>
<evidence type="ECO:0000255" key="3">
    <source>
        <dbReference type="PROSITE-ProRule" id="PRU00448"/>
    </source>
</evidence>
<evidence type="ECO:0000255" key="4">
    <source>
        <dbReference type="PROSITE-ProRule" id="PRU00757"/>
    </source>
</evidence>
<evidence type="ECO:0000305" key="5"/>
<sequence length="627" mass="70226">MATVRICVCGDESTGKSSLIASLVKDQFVNNKIQPVLPQITIPPSIGTPENVSTTIVDTSARPQDRTTLRKEIRKCNVILLVYADHYSYERVALFWMPYFRSLGVNVPVVLCANKSDLVGQGTTPQVVEEELLPVMAEFREVDSCIRTSARDHRNVNEVFFLCQKAVTHPIAPLFDYKEGHLKPLCINALKRIFYLCDKDQDGYLNEQEMRDFQARCFDKPLTTDDLDNIKLSIAKSLPASDLEKGIDLPGFLQLNKLYAEKGRHETIWIILRKFHYTDSLSLEDKFIRPKFEVPEYSSAELSPAGYRFFVDLFLIFDKDNDGGLNDEELEALFAPAPGLPSSWTDSSFPSSTVRNEAGHVTLQGWLAQWSMTTFIEPKTTIEYLAYLGFEPSNPKDSITAALKITKPRKRRSRLGRVERNVVLCYVLGASGAGKSALLDSFLNRPFYGLYHPTIKPRRAVNSVELPGGKQVYLILEELGELEPAILENRAKLDACDLICYAYDSSDPDSFSHIVDLRKKYPHLDELPSIYTALKADKDKTNQRCELQPDQYTSSLSMSLPLHVSVTWGSISELFVAYADAATTPSTAFPRSNEEGPDRTSLYIALGATACAGVAALTIWRRATNAL</sequence>
<organism>
    <name type="scientific">Gibberella zeae (strain ATCC MYA-4620 / CBS 123657 / FGSC 9075 / NRRL 31084 / PH-1)</name>
    <name type="common">Wheat head blight fungus</name>
    <name type="synonym">Fusarium graminearum</name>
    <dbReference type="NCBI Taxonomy" id="229533"/>
    <lineage>
        <taxon>Eukaryota</taxon>
        <taxon>Fungi</taxon>
        <taxon>Dikarya</taxon>
        <taxon>Ascomycota</taxon>
        <taxon>Pezizomycotina</taxon>
        <taxon>Sordariomycetes</taxon>
        <taxon>Hypocreomycetidae</taxon>
        <taxon>Hypocreales</taxon>
        <taxon>Nectriaceae</taxon>
        <taxon>Fusarium</taxon>
    </lineage>
</organism>